<feature type="chain" id="PRO_0000079375" description="Lycopene beta-cyclase">
    <location>
        <begin position="1"/>
        <end position="382"/>
    </location>
</feature>
<feature type="binding site" evidence="6">
    <location>
        <begin position="6"/>
        <end position="36"/>
    </location>
    <ligand>
        <name>NAD(+)</name>
        <dbReference type="ChEBI" id="CHEBI:57540"/>
    </ligand>
</feature>
<feature type="mutagenesis site" description="Loss of activity. Still binds FAD." evidence="2">
    <original>E</original>
    <variation>A</variation>
    <location>
        <position position="199"/>
    </location>
</feature>
<protein>
    <recommendedName>
        <fullName evidence="5">Lycopene beta-cyclase</fullName>
        <ecNumber evidence="1 2 4 8">5.5.1.19</ecNumber>
    </recommendedName>
    <alternativeName>
        <fullName evidence="5">Lycopene cyclase</fullName>
    </alternativeName>
</protein>
<sequence>MQPHYDLILVGAGLANGLIALRLQQQQPDMRILLIDAAPQAGGNHTWSFHHDDLTESQHRWIAPLVVHHWPDYQVRFPTRRRKLNSGYFCITSQRFAEVLQRQFGPHLWMDTAVAEVNAESVRLKKGQVIGARAVIDGRGYAANSALSVGFQAFIGQEWRLSHPHGLSSPIIMDATVDQQNGYRFVYSLPLSPTRLLIEDTHYIDNATLDPECARQNICDYAAQQGWQLQTLLREEQGALPITLSGNADAFWQQRPLACSGLRAGLFHPTTGYSLPLAVAVADRLSALDVFTSASIHHAITHFARERWQQQGFFRMLNRMLFLAGPADSRWRVMQRFYGLPEDLIARFYAGKLTLTDRLRILSGKPPVPVLAALQAIMTTHR</sequence>
<organism>
    <name type="scientific">Pantoea ananas</name>
    <name type="common">Erwinia uredovora</name>
    <dbReference type="NCBI Taxonomy" id="553"/>
    <lineage>
        <taxon>Bacteria</taxon>
        <taxon>Pseudomonadati</taxon>
        <taxon>Pseudomonadota</taxon>
        <taxon>Gammaproteobacteria</taxon>
        <taxon>Enterobacterales</taxon>
        <taxon>Erwiniaceae</taxon>
        <taxon>Pantoea</taxon>
    </lineage>
</organism>
<keyword id="KW-0125">Carotenoid biosynthesis</keyword>
<keyword id="KW-0997">Cell inner membrane</keyword>
<keyword id="KW-1003">Cell membrane</keyword>
<keyword id="KW-0274">FAD</keyword>
<keyword id="KW-0285">Flavoprotein</keyword>
<keyword id="KW-0413">Isomerase</keyword>
<keyword id="KW-0472">Membrane</keyword>
<keyword id="KW-0520">NAD</keyword>
<keyword id="KW-0521">NADP</keyword>
<proteinExistence type="evidence at protein level"/>
<gene>
    <name evidence="5" type="primary">crtY</name>
</gene>
<dbReference type="EC" id="5.5.1.19" evidence="1 2 4 8"/>
<dbReference type="EMBL" id="D90087">
    <property type="protein sequence ID" value="BAA14126.1"/>
    <property type="molecule type" value="Genomic_DNA"/>
</dbReference>
<dbReference type="PIR" id="C37802">
    <property type="entry name" value="C37802"/>
</dbReference>
<dbReference type="RefSeq" id="WP_176017231.1">
    <property type="nucleotide sequence ID" value="NZ_CP054909.1"/>
</dbReference>
<dbReference type="ChEMBL" id="CHEMBL2285356"/>
<dbReference type="DrugCentral" id="P21687"/>
<dbReference type="BioCyc" id="MetaCyc:MONOMER-14938"/>
<dbReference type="UniPathway" id="UPA00802"/>
<dbReference type="GO" id="GO:0005886">
    <property type="term" value="C:plasma membrane"/>
    <property type="evidence" value="ECO:0007669"/>
    <property type="project" value="UniProtKB-SubCell"/>
</dbReference>
<dbReference type="GO" id="GO:0045436">
    <property type="term" value="F:lycopene beta cyclase activity"/>
    <property type="evidence" value="ECO:0007669"/>
    <property type="project" value="InterPro"/>
</dbReference>
<dbReference type="GO" id="GO:0016705">
    <property type="term" value="F:oxidoreductase activity, acting on paired donors, with incorporation or reduction of molecular oxygen"/>
    <property type="evidence" value="ECO:0007669"/>
    <property type="project" value="InterPro"/>
</dbReference>
<dbReference type="GO" id="GO:0016117">
    <property type="term" value="P:carotenoid biosynthetic process"/>
    <property type="evidence" value="ECO:0007669"/>
    <property type="project" value="UniProtKB-KW"/>
</dbReference>
<dbReference type="Gene3D" id="3.50.50.60">
    <property type="entry name" value="FAD/NAD(P)-binding domain"/>
    <property type="match status" value="1"/>
</dbReference>
<dbReference type="InterPro" id="IPR008461">
    <property type="entry name" value="CrtY"/>
</dbReference>
<dbReference type="InterPro" id="IPR036188">
    <property type="entry name" value="FAD/NAD-bd_sf"/>
</dbReference>
<dbReference type="InterPro" id="IPR010108">
    <property type="entry name" value="Lycopene_cyclase_b/e"/>
</dbReference>
<dbReference type="NCBIfam" id="TIGR01790">
    <property type="entry name" value="carotene-cycl"/>
    <property type="match status" value="1"/>
</dbReference>
<dbReference type="NCBIfam" id="TIGR01789">
    <property type="entry name" value="lycopene_cycl"/>
    <property type="match status" value="1"/>
</dbReference>
<dbReference type="Pfam" id="PF05834">
    <property type="entry name" value="Lycopene_cycl"/>
    <property type="match status" value="1"/>
</dbReference>
<dbReference type="SUPFAM" id="SSF51905">
    <property type="entry name" value="FAD/NAD(P)-binding domain"/>
    <property type="match status" value="1"/>
</dbReference>
<name>CRTY_PANAN</name>
<evidence type="ECO:0000269" key="1">
    <source>
    </source>
</evidence>
<evidence type="ECO:0000269" key="2">
    <source>
    </source>
</evidence>
<evidence type="ECO:0000269" key="3">
    <source>
    </source>
</evidence>
<evidence type="ECO:0000269" key="4">
    <source>
    </source>
</evidence>
<evidence type="ECO:0000303" key="5">
    <source>
    </source>
</evidence>
<evidence type="ECO:0000305" key="6"/>
<evidence type="ECO:0000305" key="7">
    <source>
    </source>
</evidence>
<evidence type="ECO:0000305" key="8">
    <source>
    </source>
</evidence>
<comment type="function">
    <text evidence="1 2 3 4">Catalyzes the double cyclization reaction which converts lycopene to beta-carotene (PubMed:11943208, PubMed:20178989, PubMed:2254247). Also catalyzes the double cyclization reaction which converts neurosporene to 7,8-dihydro-beta-carotene via monocyclic beta-zeacarotene (PubMed:8898919). May also convert zeta-carotene to bicyclic 7,8,7',8'-tetrahydro-beta-carotene (PubMed:8898919).</text>
</comment>
<comment type="catalytic activity">
    <reaction evidence="1 2 4 8">
        <text>a carotenoid psi-end group = a carotenoid beta-end derivative</text>
        <dbReference type="Rhea" id="RHEA:55620"/>
        <dbReference type="ChEBI" id="CHEBI:139114"/>
        <dbReference type="ChEBI" id="CHEBI:139120"/>
        <dbReference type="EC" id="5.5.1.19"/>
    </reaction>
    <physiologicalReaction direction="left-to-right" evidence="1 2 4 8">
        <dbReference type="Rhea" id="RHEA:55621"/>
    </physiologicalReaction>
</comment>
<comment type="catalytic activity">
    <reaction evidence="7">
        <text>all-trans-lycopene = gamma-carotene</text>
        <dbReference type="Rhea" id="RHEA:32219"/>
        <dbReference type="ChEBI" id="CHEBI:15948"/>
        <dbReference type="ChEBI" id="CHEBI:27740"/>
        <dbReference type="EC" id="5.5.1.19"/>
    </reaction>
    <physiologicalReaction direction="left-to-right" evidence="7">
        <dbReference type="Rhea" id="RHEA:32220"/>
    </physiologicalReaction>
</comment>
<comment type="catalytic activity">
    <reaction evidence="2">
        <text>gamma-carotene = all-trans-beta-carotene</text>
        <dbReference type="Rhea" id="RHEA:32239"/>
        <dbReference type="ChEBI" id="CHEBI:17579"/>
        <dbReference type="ChEBI" id="CHEBI:27740"/>
        <dbReference type="EC" id="5.5.1.19"/>
    </reaction>
    <physiologicalReaction direction="left-to-right" evidence="2">
        <dbReference type="Rhea" id="RHEA:32240"/>
    </physiologicalReaction>
</comment>
<comment type="catalytic activity">
    <reaction evidence="4">
        <text>all-trans-neurosporene = beta-zeacarotene</text>
        <dbReference type="Rhea" id="RHEA:67976"/>
        <dbReference type="ChEBI" id="CHEBI:16833"/>
        <dbReference type="ChEBI" id="CHEBI:27533"/>
        <dbReference type="EC" id="5.5.1.19"/>
    </reaction>
    <physiologicalReaction direction="left-to-right" evidence="4">
        <dbReference type="Rhea" id="RHEA:67977"/>
    </physiologicalReaction>
</comment>
<comment type="catalytic activity">
    <reaction evidence="4">
        <text>beta-zeacarotene = 7,8-dihydro-beta-carotene</text>
        <dbReference type="Rhea" id="RHEA:67980"/>
        <dbReference type="ChEBI" id="CHEBI:27533"/>
        <dbReference type="ChEBI" id="CHEBI:80427"/>
    </reaction>
    <physiologicalReaction direction="left-to-right" evidence="4">
        <dbReference type="Rhea" id="RHEA:67981"/>
    </physiologicalReaction>
</comment>
<comment type="cofactor">
    <cofactor evidence="2">
        <name>FAD</name>
        <dbReference type="ChEBI" id="CHEBI:57692"/>
    </cofactor>
</comment>
<comment type="activity regulation">
    <text evidence="1 2">Activity is increased in the presence of NAD(P)H (PubMed:11943208, PubMed:20178989). NADPH is not involved directly in the cyclization reaction, but must play an indirect role, e.g. as an allosteric activator (PubMed:11943208).</text>
</comment>
<comment type="pathway">
    <text evidence="8">Carotenoid biosynthesis; beta-carotene biosynthesis.</text>
</comment>
<comment type="subcellular location">
    <subcellularLocation>
        <location evidence="2">Cell inner membrane</location>
    </subcellularLocation>
    <text evidence="2">Membrane-bound.</text>
</comment>
<comment type="similarity">
    <text evidence="6">Belongs to the lycopene cyclase family.</text>
</comment>
<reference key="1">
    <citation type="journal article" date="1990" name="J. Bacteriol.">
        <title>Elucidation of the Erwinia uredovora carotenoid biosynthetic pathway by functional analysis of gene products expressed in Escherichia coli.</title>
        <authorList>
            <person name="Misawa N."/>
            <person name="Nakagawa M."/>
            <person name="Kobayashi K."/>
            <person name="Yamano S."/>
            <person name="Izawa Y."/>
            <person name="Nakamura K."/>
            <person name="Harashima K."/>
        </authorList>
    </citation>
    <scope>NUCLEOTIDE SEQUENCE [GENOMIC DNA]</scope>
    <scope>FUNCTION</scope>
    <scope>CATALYTIC ACTIVITY</scope>
    <scope>PATHWAY</scope>
    <source>
        <strain>ATCC 19321 / DSM 30080 / NCPPB 800 / NRRL B-14773 / 20D3</strain>
    </source>
</reference>
<reference key="2">
    <citation type="journal article" date="1996" name="Eur. J. Biochem.">
        <title>The carotenoid 7,8-dihydro-psi end group can be cyclized by the lycopene cyclases from the bacterium Erwinia uredovora and the higher plant Capsicum annuum.</title>
        <authorList>
            <person name="Takaichi S."/>
            <person name="Sandmann G."/>
            <person name="Schnurr G."/>
            <person name="Satomi Y."/>
            <person name="Suzuki A."/>
            <person name="Misawa N."/>
        </authorList>
    </citation>
    <scope>FUNCTION</scope>
    <scope>CATALYTIC ACTIVITY</scope>
</reference>
<reference key="3">
    <citation type="journal article" date="2002" name="FEBS Lett.">
        <title>Involvement of NADPH in the cyclization reaction of carotenoid biosynthesis.</title>
        <authorList>
            <person name="Hornero-Mendez D."/>
            <person name="Britton G."/>
        </authorList>
    </citation>
    <scope>FUNCTION</scope>
    <scope>CATALYTIC ACTIVITY</scope>
    <scope>ACTIVITY REGULATION</scope>
</reference>
<reference key="4">
    <citation type="journal article" date="2010" name="J. Biol. Chem.">
        <title>The lycopene cyclase CrtY from Pantoea ananatis (formerly Erwinia uredovora) catalyzes an FADred-dependent non-redox reaction.</title>
        <authorList>
            <person name="Yu Q."/>
            <person name="Schaub P."/>
            <person name="Ghisla S."/>
            <person name="Al-Babili S."/>
            <person name="Krieger-Liszkay A."/>
            <person name="Beyer P."/>
        </authorList>
    </citation>
    <scope>FUNCTION</scope>
    <scope>CATALYTIC ACTIVITY</scope>
    <scope>COFACTOR</scope>
    <scope>ACTIVITY REGULATION</scope>
    <scope>SUBCELLULAR LOCATION</scope>
    <scope>MUTAGENESIS OF GLU-199</scope>
</reference>
<accession>P21687</accession>